<protein>
    <recommendedName>
        <fullName evidence="6">Paired box protein 1 homolog</fullName>
    </recommendedName>
</protein>
<gene>
    <name evidence="10" type="primary">pax-1</name>
    <name evidence="10" type="ORF">K07C11.1</name>
</gene>
<organism evidence="9">
    <name type="scientific">Caenorhabditis elegans</name>
    <dbReference type="NCBI Taxonomy" id="6239"/>
    <lineage>
        <taxon>Eukaryota</taxon>
        <taxon>Metazoa</taxon>
        <taxon>Ecdysozoa</taxon>
        <taxon>Nematoda</taxon>
        <taxon>Chromadorea</taxon>
        <taxon>Rhabditida</taxon>
        <taxon>Rhabditina</taxon>
        <taxon>Rhabditomorpha</taxon>
        <taxon>Rhabditoidea</taxon>
        <taxon>Rhabditidae</taxon>
        <taxon>Peloderinae</taxon>
        <taxon>Caenorhabditis</taxon>
    </lineage>
</organism>
<reference evidence="9" key="1">
    <citation type="journal article" date="1998" name="Science">
        <title>Genome sequence of the nematode C. elegans: a platform for investigating biology.</title>
        <authorList>
            <consortium name="The C. elegans sequencing consortium"/>
        </authorList>
    </citation>
    <scope>NUCLEOTIDE SEQUENCE [LARGE SCALE GENOMIC DNA]</scope>
    <source>
        <strain evidence="9">Bristol N2</strain>
    </source>
</reference>
<reference evidence="7" key="2">
    <citation type="journal article" date="2010" name="PLoS Genet.">
        <title>Dynamic chromatin organization during foregut development mediated by the organ selector gene PHA-4/FoxA.</title>
        <authorList>
            <person name="Fakhouri T.H."/>
            <person name="Stevenson J."/>
            <person name="Chisholm A.D."/>
            <person name="Mango S.E."/>
        </authorList>
    </citation>
    <scope>SUBCELLULAR LOCATION</scope>
    <scope>DEVELOPMENTAL STAGE</scope>
</reference>
<reference evidence="7" key="3">
    <citation type="journal article" date="2012" name="PLoS ONE">
        <title>Genomic analysis of immune response against Vibrio cholerae hemolysin in Caenorhabditis elegans.</title>
        <authorList>
            <person name="Sahu S.N."/>
            <person name="Lewis J."/>
            <person name="Patel I."/>
            <person name="Bozdag S."/>
            <person name="Lee J.H."/>
            <person name="LeClerc J.E."/>
            <person name="Cinar H.N."/>
        </authorList>
    </citation>
    <scope>FUNCTION</scope>
</reference>
<comment type="function">
    <text evidence="1 5 8">Transcription factor (By similarity). May play a role in pharyngeal cell differentiation (Probable). May have a protective role in response to infection by the Gram-negative bacterium Vibrio cholerae (PubMed:22675448).</text>
</comment>
<comment type="subcellular location">
    <subcellularLocation>
        <location evidence="4">Nucleus</location>
    </subcellularLocation>
</comment>
<comment type="developmental stage">
    <text evidence="4">Expressed in 14 pharyngeal cells, which include nine marginal cells, the e2 epithelial cells and the pm8 muscle (PubMed:20714352). Earliest expression in marginal cells is shortly after embryonic cell division ceases, at the late-bean to early-comma stages of development (PubMed:20714352). Expression in these cells diminishes during later embryogenesis and is absent in larvae and adults (PubMed:20714352).</text>
</comment>
<sequence>MNCDTAQPWMMSSYHPSTTSDVFWTTTPSSTSTTPSSDNGIQQYSSISTSSGYAPANSPAKTAEVNQLGGVFVNGRPLPFEMRCKIVELSRQGTRPCDISRQLKISHGCVSKILTRFSENGTIMPGTIGGSRPRVTTPKVVEYIRSLKRSDPGIFAWEIRDRLISADICDRANLPSVSSISRILRNKNGGNSSSSSSSQLRYIRDQLAEQQQQQHLQQHQYMEYNNNELNQISGNLDYQVSSSNTPPSYDSYHFIAN</sequence>
<accession>Q21272</accession>
<feature type="chain" id="PRO_0000455511" description="Paired box protein 1 homolog">
    <location>
        <begin position="1"/>
        <end position="257"/>
    </location>
</feature>
<feature type="DNA-binding region" description="Paired" evidence="2">
    <location>
        <begin position="61"/>
        <end position="187"/>
    </location>
</feature>
<feature type="region of interest" description="Disordered" evidence="3">
    <location>
        <begin position="26"/>
        <end position="58"/>
    </location>
</feature>
<feature type="region of interest" description="PAI subdomain" evidence="2">
    <location>
        <begin position="64"/>
        <end position="120"/>
    </location>
</feature>
<feature type="region of interest" description="RED subdomain" evidence="2">
    <location>
        <begin position="139"/>
        <end position="187"/>
    </location>
</feature>
<feature type="compositionally biased region" description="Low complexity" evidence="3">
    <location>
        <begin position="26"/>
        <end position="37"/>
    </location>
</feature>
<feature type="compositionally biased region" description="Polar residues" evidence="3">
    <location>
        <begin position="38"/>
        <end position="52"/>
    </location>
</feature>
<name>PAX1H_CAEEL</name>
<proteinExistence type="evidence at transcript level"/>
<dbReference type="EMBL" id="BX284605">
    <property type="protein sequence ID" value="CCD64756.1"/>
    <property type="molecule type" value="Genomic_DNA"/>
</dbReference>
<dbReference type="PIR" id="E89124">
    <property type="entry name" value="E89124"/>
</dbReference>
<dbReference type="RefSeq" id="NP_505120.1">
    <property type="nucleotide sequence ID" value="NM_072719.2"/>
</dbReference>
<dbReference type="SMR" id="Q21272"/>
<dbReference type="FunCoup" id="Q21272">
    <property type="interactions" value="316"/>
</dbReference>
<dbReference type="IntAct" id="Q21272">
    <property type="interactions" value="2"/>
</dbReference>
<dbReference type="STRING" id="6239.K07C11.1.1"/>
<dbReference type="PaxDb" id="6239-K07C11.1"/>
<dbReference type="EnsemblMetazoa" id="K07C11.1.1">
    <property type="protein sequence ID" value="K07C11.1.1"/>
    <property type="gene ID" value="WBGene00003937"/>
</dbReference>
<dbReference type="GeneID" id="187105"/>
<dbReference type="KEGG" id="cel:CELE_K07C11.1"/>
<dbReference type="UCSC" id="K07C11.1">
    <property type="organism name" value="c. elegans"/>
</dbReference>
<dbReference type="AGR" id="WB:WBGene00003937"/>
<dbReference type="CTD" id="187105"/>
<dbReference type="WormBase" id="K07C11.1">
    <property type="protein sequence ID" value="CE07344"/>
    <property type="gene ID" value="WBGene00003937"/>
    <property type="gene designation" value="pax-1"/>
</dbReference>
<dbReference type="eggNOG" id="KOG3517">
    <property type="taxonomic scope" value="Eukaryota"/>
</dbReference>
<dbReference type="GeneTree" id="ENSGT00940000165812"/>
<dbReference type="HOGENOM" id="CLU_1134398_0_0_1"/>
<dbReference type="InParanoid" id="Q21272"/>
<dbReference type="OMA" id="TAQPWMM"/>
<dbReference type="OrthoDB" id="3225452at2759"/>
<dbReference type="PhylomeDB" id="Q21272"/>
<dbReference type="PRO" id="PR:Q21272"/>
<dbReference type="Proteomes" id="UP000001940">
    <property type="component" value="Chromosome V"/>
</dbReference>
<dbReference type="Bgee" id="WBGene00003937">
    <property type="expression patterns" value="Expressed in pharyngeal muscle cell (C elegans) and 2 other cell types or tissues"/>
</dbReference>
<dbReference type="GO" id="GO:0005634">
    <property type="term" value="C:nucleus"/>
    <property type="evidence" value="ECO:0000314"/>
    <property type="project" value="UniProtKB"/>
</dbReference>
<dbReference type="GO" id="GO:0000981">
    <property type="term" value="F:DNA-binding transcription factor activity, RNA polymerase II-specific"/>
    <property type="evidence" value="ECO:0000318"/>
    <property type="project" value="GO_Central"/>
</dbReference>
<dbReference type="GO" id="GO:0000978">
    <property type="term" value="F:RNA polymerase II cis-regulatory region sequence-specific DNA binding"/>
    <property type="evidence" value="ECO:0000318"/>
    <property type="project" value="GO_Central"/>
</dbReference>
<dbReference type="GO" id="GO:0050829">
    <property type="term" value="P:defense response to Gram-negative bacterium"/>
    <property type="evidence" value="ECO:0000315"/>
    <property type="project" value="UniProtKB"/>
</dbReference>
<dbReference type="GO" id="GO:0006357">
    <property type="term" value="P:regulation of transcription by RNA polymerase II"/>
    <property type="evidence" value="ECO:0000318"/>
    <property type="project" value="GO_Central"/>
</dbReference>
<dbReference type="FunFam" id="1.10.10.10:FF:000003">
    <property type="entry name" value="Paired box protein Pax-6"/>
    <property type="match status" value="1"/>
</dbReference>
<dbReference type="Gene3D" id="1.10.10.10">
    <property type="entry name" value="Winged helix-like DNA-binding domain superfamily/Winged helix DNA-binding domain"/>
    <property type="match status" value="2"/>
</dbReference>
<dbReference type="InterPro" id="IPR009057">
    <property type="entry name" value="Homeodomain-like_sf"/>
</dbReference>
<dbReference type="InterPro" id="IPR043182">
    <property type="entry name" value="PAIRED_DNA-bd_dom"/>
</dbReference>
<dbReference type="InterPro" id="IPR001523">
    <property type="entry name" value="Paired_dom"/>
</dbReference>
<dbReference type="InterPro" id="IPR043565">
    <property type="entry name" value="PAX_fam"/>
</dbReference>
<dbReference type="InterPro" id="IPR036388">
    <property type="entry name" value="WH-like_DNA-bd_sf"/>
</dbReference>
<dbReference type="PANTHER" id="PTHR45636:SF16">
    <property type="entry name" value="PAIRED BOX POX-MESO PROTEIN"/>
    <property type="match status" value="1"/>
</dbReference>
<dbReference type="PANTHER" id="PTHR45636">
    <property type="entry name" value="PAIRED BOX PROTEIN PAX-6-RELATED-RELATED"/>
    <property type="match status" value="1"/>
</dbReference>
<dbReference type="Pfam" id="PF00292">
    <property type="entry name" value="PAX"/>
    <property type="match status" value="1"/>
</dbReference>
<dbReference type="PRINTS" id="PR00027">
    <property type="entry name" value="PAIREDBOX"/>
</dbReference>
<dbReference type="SMART" id="SM00351">
    <property type="entry name" value="PAX"/>
    <property type="match status" value="1"/>
</dbReference>
<dbReference type="SUPFAM" id="SSF46689">
    <property type="entry name" value="Homeodomain-like"/>
    <property type="match status" value="1"/>
</dbReference>
<dbReference type="PROSITE" id="PS00034">
    <property type="entry name" value="PAIRED_1"/>
    <property type="match status" value="1"/>
</dbReference>
<dbReference type="PROSITE" id="PS51057">
    <property type="entry name" value="PAIRED_2"/>
    <property type="match status" value="1"/>
</dbReference>
<evidence type="ECO:0000250" key="1">
    <source>
        <dbReference type="UniProtKB" id="P55771"/>
    </source>
</evidence>
<evidence type="ECO:0000255" key="2">
    <source>
        <dbReference type="PROSITE-ProRule" id="PRU00381"/>
    </source>
</evidence>
<evidence type="ECO:0000256" key="3">
    <source>
        <dbReference type="SAM" id="MobiDB-lite"/>
    </source>
</evidence>
<evidence type="ECO:0000269" key="4">
    <source>
    </source>
</evidence>
<evidence type="ECO:0000269" key="5">
    <source>
    </source>
</evidence>
<evidence type="ECO:0000303" key="6">
    <source>
    </source>
</evidence>
<evidence type="ECO:0000305" key="7"/>
<evidence type="ECO:0000305" key="8">
    <source>
    </source>
</evidence>
<evidence type="ECO:0000312" key="9">
    <source>
        <dbReference type="Proteomes" id="UP000001940"/>
    </source>
</evidence>
<evidence type="ECO:0000312" key="10">
    <source>
        <dbReference type="WormBase" id="K07C11.1"/>
    </source>
</evidence>
<keyword id="KW-0217">Developmental protein</keyword>
<keyword id="KW-0238">DNA-binding</keyword>
<keyword id="KW-0539">Nucleus</keyword>
<keyword id="KW-0563">Paired box</keyword>
<keyword id="KW-1185">Reference proteome</keyword>
<keyword id="KW-0804">Transcription</keyword>
<keyword id="KW-0805">Transcription regulation</keyword>